<feature type="chain" id="PRO_0000096252" description="Methyl-CpG-binding domain protein 3-like 1">
    <location>
        <begin position="1"/>
        <end position="186"/>
    </location>
</feature>
<feature type="region of interest" description="Transcription repressor" evidence="1">
    <location>
        <begin position="1"/>
        <end position="104"/>
    </location>
</feature>
<feature type="sequence conflict" description="In Ref. 3; AAH61034." evidence="3" ref="3">
    <original>LE</original>
    <variation>FK</variation>
    <location>
        <begin position="57"/>
        <end position="58"/>
    </location>
</feature>
<feature type="sequence conflict" description="In Ref. 2; BAB31487." evidence="3" ref="2">
    <original>C</original>
    <variation>S</variation>
    <location>
        <position position="64"/>
    </location>
</feature>
<gene>
    <name type="primary">Mbd3l1</name>
    <name type="synonym">Mbd3l</name>
</gene>
<protein>
    <recommendedName>
        <fullName>Methyl-CpG-binding domain protein 3-like 1</fullName>
        <shortName>MBD3-like protein 1</shortName>
    </recommendedName>
</protein>
<keyword id="KW-0539">Nucleus</keyword>
<keyword id="KW-1185">Reference proteome</keyword>
<keyword id="KW-0678">Repressor</keyword>
<keyword id="KW-0804">Transcription</keyword>
<keyword id="KW-0805">Transcription regulation</keyword>
<proteinExistence type="evidence at transcript level"/>
<name>MB3L1_MOUSE</name>
<reference key="1">
    <citation type="journal article" date="2002" name="Genomics">
        <title>MBD3L1 and MBD3L2, two new proteins homologous to the methyl-CpG-binding proteins MBD2 and MBD3: characterization of MBD3L1 as a testis-specific transcriptional repressor.</title>
        <authorList>
            <person name="Jiang C.-L."/>
            <person name="Jin S.-G."/>
            <person name="Lee D.-H."/>
            <person name="Lan Z.-J."/>
            <person name="Xu X."/>
            <person name="O'Connor T.R."/>
            <person name="Szabo P.E."/>
            <person name="Mann J.R."/>
            <person name="Cooney A.J."/>
            <person name="Pfeifer G.P."/>
        </authorList>
    </citation>
    <scope>NUCLEOTIDE SEQUENCE [MRNA]</scope>
    <scope>TISSUE SPECIFICITY</scope>
    <source>
        <strain>C57BL/6J</strain>
    </source>
</reference>
<reference key="2">
    <citation type="journal article" date="2005" name="Science">
        <title>The transcriptional landscape of the mammalian genome.</title>
        <authorList>
            <person name="Carninci P."/>
            <person name="Kasukawa T."/>
            <person name="Katayama S."/>
            <person name="Gough J."/>
            <person name="Frith M.C."/>
            <person name="Maeda N."/>
            <person name="Oyama R."/>
            <person name="Ravasi T."/>
            <person name="Lenhard B."/>
            <person name="Wells C."/>
            <person name="Kodzius R."/>
            <person name="Shimokawa K."/>
            <person name="Bajic V.B."/>
            <person name="Brenner S.E."/>
            <person name="Batalov S."/>
            <person name="Forrest A.R."/>
            <person name="Zavolan M."/>
            <person name="Davis M.J."/>
            <person name="Wilming L.G."/>
            <person name="Aidinis V."/>
            <person name="Allen J.E."/>
            <person name="Ambesi-Impiombato A."/>
            <person name="Apweiler R."/>
            <person name="Aturaliya R.N."/>
            <person name="Bailey T.L."/>
            <person name="Bansal M."/>
            <person name="Baxter L."/>
            <person name="Beisel K.W."/>
            <person name="Bersano T."/>
            <person name="Bono H."/>
            <person name="Chalk A.M."/>
            <person name="Chiu K.P."/>
            <person name="Choudhary V."/>
            <person name="Christoffels A."/>
            <person name="Clutterbuck D.R."/>
            <person name="Crowe M.L."/>
            <person name="Dalla E."/>
            <person name="Dalrymple B.P."/>
            <person name="de Bono B."/>
            <person name="Della Gatta G."/>
            <person name="di Bernardo D."/>
            <person name="Down T."/>
            <person name="Engstrom P."/>
            <person name="Fagiolini M."/>
            <person name="Faulkner G."/>
            <person name="Fletcher C.F."/>
            <person name="Fukushima T."/>
            <person name="Furuno M."/>
            <person name="Futaki S."/>
            <person name="Gariboldi M."/>
            <person name="Georgii-Hemming P."/>
            <person name="Gingeras T.R."/>
            <person name="Gojobori T."/>
            <person name="Green R.E."/>
            <person name="Gustincich S."/>
            <person name="Harbers M."/>
            <person name="Hayashi Y."/>
            <person name="Hensch T.K."/>
            <person name="Hirokawa N."/>
            <person name="Hill D."/>
            <person name="Huminiecki L."/>
            <person name="Iacono M."/>
            <person name="Ikeo K."/>
            <person name="Iwama A."/>
            <person name="Ishikawa T."/>
            <person name="Jakt M."/>
            <person name="Kanapin A."/>
            <person name="Katoh M."/>
            <person name="Kawasawa Y."/>
            <person name="Kelso J."/>
            <person name="Kitamura H."/>
            <person name="Kitano H."/>
            <person name="Kollias G."/>
            <person name="Krishnan S.P."/>
            <person name="Kruger A."/>
            <person name="Kummerfeld S.K."/>
            <person name="Kurochkin I.V."/>
            <person name="Lareau L.F."/>
            <person name="Lazarevic D."/>
            <person name="Lipovich L."/>
            <person name="Liu J."/>
            <person name="Liuni S."/>
            <person name="McWilliam S."/>
            <person name="Madan Babu M."/>
            <person name="Madera M."/>
            <person name="Marchionni L."/>
            <person name="Matsuda H."/>
            <person name="Matsuzawa S."/>
            <person name="Miki H."/>
            <person name="Mignone F."/>
            <person name="Miyake S."/>
            <person name="Morris K."/>
            <person name="Mottagui-Tabar S."/>
            <person name="Mulder N."/>
            <person name="Nakano N."/>
            <person name="Nakauchi H."/>
            <person name="Ng P."/>
            <person name="Nilsson R."/>
            <person name="Nishiguchi S."/>
            <person name="Nishikawa S."/>
            <person name="Nori F."/>
            <person name="Ohara O."/>
            <person name="Okazaki Y."/>
            <person name="Orlando V."/>
            <person name="Pang K.C."/>
            <person name="Pavan W.J."/>
            <person name="Pavesi G."/>
            <person name="Pesole G."/>
            <person name="Petrovsky N."/>
            <person name="Piazza S."/>
            <person name="Reed J."/>
            <person name="Reid J.F."/>
            <person name="Ring B.Z."/>
            <person name="Ringwald M."/>
            <person name="Rost B."/>
            <person name="Ruan Y."/>
            <person name="Salzberg S.L."/>
            <person name="Sandelin A."/>
            <person name="Schneider C."/>
            <person name="Schoenbach C."/>
            <person name="Sekiguchi K."/>
            <person name="Semple C.A."/>
            <person name="Seno S."/>
            <person name="Sessa L."/>
            <person name="Sheng Y."/>
            <person name="Shibata Y."/>
            <person name="Shimada H."/>
            <person name="Shimada K."/>
            <person name="Silva D."/>
            <person name="Sinclair B."/>
            <person name="Sperling S."/>
            <person name="Stupka E."/>
            <person name="Sugiura K."/>
            <person name="Sultana R."/>
            <person name="Takenaka Y."/>
            <person name="Taki K."/>
            <person name="Tammoja K."/>
            <person name="Tan S.L."/>
            <person name="Tang S."/>
            <person name="Taylor M.S."/>
            <person name="Tegner J."/>
            <person name="Teichmann S.A."/>
            <person name="Ueda H.R."/>
            <person name="van Nimwegen E."/>
            <person name="Verardo R."/>
            <person name="Wei C.L."/>
            <person name="Yagi K."/>
            <person name="Yamanishi H."/>
            <person name="Zabarovsky E."/>
            <person name="Zhu S."/>
            <person name="Zimmer A."/>
            <person name="Hide W."/>
            <person name="Bult C."/>
            <person name="Grimmond S.M."/>
            <person name="Teasdale R.D."/>
            <person name="Liu E.T."/>
            <person name="Brusic V."/>
            <person name="Quackenbush J."/>
            <person name="Wahlestedt C."/>
            <person name="Mattick J.S."/>
            <person name="Hume D.A."/>
            <person name="Kai C."/>
            <person name="Sasaki D."/>
            <person name="Tomaru Y."/>
            <person name="Fukuda S."/>
            <person name="Kanamori-Katayama M."/>
            <person name="Suzuki M."/>
            <person name="Aoki J."/>
            <person name="Arakawa T."/>
            <person name="Iida J."/>
            <person name="Imamura K."/>
            <person name="Itoh M."/>
            <person name="Kato T."/>
            <person name="Kawaji H."/>
            <person name="Kawagashira N."/>
            <person name="Kawashima T."/>
            <person name="Kojima M."/>
            <person name="Kondo S."/>
            <person name="Konno H."/>
            <person name="Nakano K."/>
            <person name="Ninomiya N."/>
            <person name="Nishio T."/>
            <person name="Okada M."/>
            <person name="Plessy C."/>
            <person name="Shibata K."/>
            <person name="Shiraki T."/>
            <person name="Suzuki S."/>
            <person name="Tagami M."/>
            <person name="Waki K."/>
            <person name="Watahiki A."/>
            <person name="Okamura-Oho Y."/>
            <person name="Suzuki H."/>
            <person name="Kawai J."/>
            <person name="Hayashizaki Y."/>
        </authorList>
    </citation>
    <scope>NUCLEOTIDE SEQUENCE [LARGE SCALE MRNA]</scope>
    <source>
        <strain>C57BL/6J</strain>
        <tissue>Testis</tissue>
    </source>
</reference>
<reference key="3">
    <citation type="journal article" date="2004" name="Genome Res.">
        <title>The status, quality, and expansion of the NIH full-length cDNA project: the Mammalian Gene Collection (MGC).</title>
        <authorList>
            <consortium name="The MGC Project Team"/>
        </authorList>
    </citation>
    <scope>NUCLEOTIDE SEQUENCE [LARGE SCALE MRNA]</scope>
    <source>
        <tissue>Testis</tissue>
    </source>
</reference>
<evidence type="ECO:0000250" key="1"/>
<evidence type="ECO:0000269" key="2">
    <source>
    </source>
</evidence>
<evidence type="ECO:0000305" key="3"/>
<comment type="function">
    <text evidence="1">Transcriptional repressor.</text>
</comment>
<comment type="subcellular location">
    <subcellularLocation>
        <location evidence="1">Nucleus</location>
    </subcellularLocation>
    <text evidence="1">Nuclear, in large foci.</text>
</comment>
<comment type="tissue specificity">
    <text evidence="2">Highly expressed in testis. Not detected in the other tissues tested.</text>
</comment>
<comment type="domain">
    <text evidence="1">The N-terminal half of the protein mediates transcription repression.</text>
</comment>
<comment type="miscellaneous">
    <text evidence="1">Does not bind methylated DNA.</text>
</comment>
<comment type="similarity">
    <text evidence="3">Belongs to the MBD3L family.</text>
</comment>
<organism>
    <name type="scientific">Mus musculus</name>
    <name type="common">Mouse</name>
    <dbReference type="NCBI Taxonomy" id="10090"/>
    <lineage>
        <taxon>Eukaryota</taxon>
        <taxon>Metazoa</taxon>
        <taxon>Chordata</taxon>
        <taxon>Craniata</taxon>
        <taxon>Vertebrata</taxon>
        <taxon>Euteleostomi</taxon>
        <taxon>Mammalia</taxon>
        <taxon>Eutheria</taxon>
        <taxon>Euarchontoglires</taxon>
        <taxon>Glires</taxon>
        <taxon>Rodentia</taxon>
        <taxon>Myomorpha</taxon>
        <taxon>Muroidea</taxon>
        <taxon>Muridae</taxon>
        <taxon>Murinae</taxon>
        <taxon>Mus</taxon>
        <taxon>Mus</taxon>
    </lineage>
</organism>
<sequence length="186" mass="20676">MGKTSQRKQCDCENPSKPCLSTSIPLRMSSYTFKRPVTKITSHLGNEVRYYQWEETLEKPEQACWQKRLQGLQAYSSAGELLSTSDLAKTLKDLTSTDTVASASDTQATSIDITSVPTLESSSHLANMIPEAGPQILCKEFLVTEQDIINQERKVKIARERLAVALIAHKLASEMETVRGSRKANL</sequence>
<dbReference type="EMBL" id="AY038023">
    <property type="protein sequence ID" value="AAK72592.1"/>
    <property type="molecule type" value="mRNA"/>
</dbReference>
<dbReference type="EMBL" id="AK006927">
    <property type="protein sequence ID" value="BAB24794.1"/>
    <property type="molecule type" value="mRNA"/>
</dbReference>
<dbReference type="EMBL" id="AK018931">
    <property type="protein sequence ID" value="BAB31487.1"/>
    <property type="molecule type" value="mRNA"/>
</dbReference>
<dbReference type="EMBL" id="BC061034">
    <property type="protein sequence ID" value="AAH61034.1"/>
    <property type="molecule type" value="mRNA"/>
</dbReference>
<dbReference type="CCDS" id="CCDS22845.1"/>
<dbReference type="RefSeq" id="NP_001344347.1">
    <property type="nucleotide sequence ID" value="NM_001357418.1"/>
</dbReference>
<dbReference type="RefSeq" id="NP_001344348.1">
    <property type="nucleotide sequence ID" value="NM_001357419.1"/>
</dbReference>
<dbReference type="RefSeq" id="NP_082833.1">
    <property type="nucleotide sequence ID" value="NM_028557.3"/>
</dbReference>
<dbReference type="RefSeq" id="XP_006510702.1">
    <property type="nucleotide sequence ID" value="XM_006510639.1"/>
</dbReference>
<dbReference type="RefSeq" id="XP_006510703.1">
    <property type="nucleotide sequence ID" value="XM_006510640.2"/>
</dbReference>
<dbReference type="SMR" id="Q9D9H3"/>
<dbReference type="FunCoup" id="Q9D9H3">
    <property type="interactions" value="349"/>
</dbReference>
<dbReference type="STRING" id="10090.ENSMUSP00000063957"/>
<dbReference type="PhosphoSitePlus" id="Q9D9H3"/>
<dbReference type="PaxDb" id="10090-ENSMUSP00000063957"/>
<dbReference type="ProteomicsDB" id="252739"/>
<dbReference type="Antibodypedia" id="24961">
    <property type="antibodies" value="110 antibodies from 17 providers"/>
</dbReference>
<dbReference type="DNASU" id="73503"/>
<dbReference type="Ensembl" id="ENSMUST00000069218.5">
    <property type="protein sequence ID" value="ENSMUSP00000063957.4"/>
    <property type="gene ID" value="ENSMUSG00000038691.6"/>
</dbReference>
<dbReference type="Ensembl" id="ENSMUST00000213625.2">
    <property type="protein sequence ID" value="ENSMUSP00000149619.2"/>
    <property type="gene ID" value="ENSMUSG00000038691.6"/>
</dbReference>
<dbReference type="Ensembl" id="ENSMUST00000215255.2">
    <property type="protein sequence ID" value="ENSMUSP00000149425.2"/>
    <property type="gene ID" value="ENSMUSG00000038691.6"/>
</dbReference>
<dbReference type="GeneID" id="73503"/>
<dbReference type="KEGG" id="mmu:73503"/>
<dbReference type="UCSC" id="uc009ogu.1">
    <property type="organism name" value="mouse"/>
</dbReference>
<dbReference type="AGR" id="MGI:1920753"/>
<dbReference type="CTD" id="85509"/>
<dbReference type="MGI" id="MGI:1920753">
    <property type="gene designation" value="Mbd3l1"/>
</dbReference>
<dbReference type="VEuPathDB" id="HostDB:ENSMUSG00000038691"/>
<dbReference type="eggNOG" id="KOG4161">
    <property type="taxonomic scope" value="Eukaryota"/>
</dbReference>
<dbReference type="GeneTree" id="ENSGT00950000183005"/>
<dbReference type="HOGENOM" id="CLU_069710_1_0_1"/>
<dbReference type="InParanoid" id="Q9D9H3"/>
<dbReference type="OMA" id="HDCGNQS"/>
<dbReference type="OrthoDB" id="10072024at2759"/>
<dbReference type="PhylomeDB" id="Q9D9H3"/>
<dbReference type="TreeFam" id="TF325032"/>
<dbReference type="BioGRID-ORCS" id="73503">
    <property type="hits" value="1 hit in 79 CRISPR screens"/>
</dbReference>
<dbReference type="PRO" id="PR:Q9D9H3"/>
<dbReference type="Proteomes" id="UP000000589">
    <property type="component" value="Chromosome 9"/>
</dbReference>
<dbReference type="RNAct" id="Q9D9H3">
    <property type="molecule type" value="protein"/>
</dbReference>
<dbReference type="Bgee" id="ENSMUSG00000038691">
    <property type="expression patterns" value="Expressed in seminiferous tubule of testis and 5 other cell types or tissues"/>
</dbReference>
<dbReference type="ExpressionAtlas" id="Q9D9H3">
    <property type="expression patterns" value="baseline and differential"/>
</dbReference>
<dbReference type="GO" id="GO:0005634">
    <property type="term" value="C:nucleus"/>
    <property type="evidence" value="ECO:0000266"/>
    <property type="project" value="MGI"/>
</dbReference>
<dbReference type="GO" id="GO:0000122">
    <property type="term" value="P:negative regulation of transcription by RNA polymerase II"/>
    <property type="evidence" value="ECO:0000266"/>
    <property type="project" value="MGI"/>
</dbReference>
<dbReference type="InterPro" id="IPR032343">
    <property type="entry name" value="MBD2/MBD3_p55-bd"/>
</dbReference>
<dbReference type="InterPro" id="IPR025884">
    <property type="entry name" value="MeCpG-bd_2/3_C_dom"/>
</dbReference>
<dbReference type="Pfam" id="PF14048">
    <property type="entry name" value="MBD_C"/>
    <property type="match status" value="1"/>
</dbReference>
<dbReference type="Pfam" id="PF16564">
    <property type="entry name" value="MBDa"/>
    <property type="match status" value="1"/>
</dbReference>
<accession>Q9D9H3</accession>
<accession>Q6P8W5</accession>
<accession>Q9D2S3</accession>